<sequence length="521" mass="58966">MAAVLANGDSQGRPQRNYQVVVAGTRDMGIGKDGVLPWKLPGDLKFFKELTLTTSDPVKKNAVIMGRKTWESIPVKSRPLPGRLNVILTRSGSFDFATVENVVICGSMESALELLASTPYCLSIEKVFVIGGGQVLREYLKGPACEAIHLTDIQSSIECDTFIPPVDFSVFQPWYSSFPVIESNIRHSFVSFVRVRKSVAETHESNGKESTEVDTKNDKFETENFSFLPKMVYDRHEEYQYLNLVEDIIRSGAQKNDRTGTGTLSKFGCQMRFNLRKNFPLLTTKRVFWRGVVEELLWFISGSTNAKVLQEKGIHIWDGNASREYLNSVGLAHREEGDLGPIYGFQWRHFGAEYTDMHADYTGKGFDQLMDVIDKIKNDPEDRRIILSAWNPSDLKKMALPPCHMFAQFYVENGELSCQMYQRSADMGLGVPFNIASYSLLTYMIAQVCDLSPGDFVHVIGDAHVYRNHVRALEEQIQKMPKPFPILKINPSKKDIDSFMASDFKLVGYDPHQKIEMKMAV</sequence>
<reference key="1">
    <citation type="journal article" date="1999" name="Plant Mol. Biol.">
        <title>Mapping and expression of a bifunctional thymidylate synthase, dihydrofolate reductase gene from maize.</title>
        <authorList>
            <person name="Cox K.M."/>
            <person name="Robertson D."/>
            <person name="Fites R.C."/>
        </authorList>
    </citation>
    <scope>NUCLEOTIDE SEQUENCE [MRNA]</scope>
</reference>
<proteinExistence type="evidence at transcript level"/>
<accession>O81395</accession>
<name>DRTS_MAIZE</name>
<feature type="chain" id="PRO_0000186358" description="Bifunctional dihydrofolate reductase-thymidylate synthase">
    <location>
        <begin position="1"/>
        <end position="521"/>
    </location>
</feature>
<feature type="domain" description="DHFR">
    <location>
        <begin position="17"/>
        <end position="194"/>
    </location>
</feature>
<feature type="region of interest" description="Thymidylate synthase">
    <location>
        <begin position="197"/>
        <end position="521"/>
    </location>
</feature>
<feature type="active site" evidence="1">
    <location>
        <position position="403"/>
    </location>
</feature>
<feature type="binding site" evidence="1">
    <location>
        <position position="21"/>
    </location>
    <ligand>
        <name>substrate</name>
    </ligand>
</feature>
<feature type="binding site" evidence="1">
    <location>
        <position position="23"/>
    </location>
    <ligand>
        <name>NADP(+)</name>
        <dbReference type="ChEBI" id="CHEBI:58349"/>
    </ligand>
</feature>
<feature type="binding site" evidence="1">
    <location>
        <begin position="29"/>
        <end position="35"/>
    </location>
    <ligand>
        <name>NADP(+)</name>
        <dbReference type="ChEBI" id="CHEBI:58349"/>
    </ligand>
</feature>
<feature type="binding site" evidence="1">
    <location>
        <position position="43"/>
    </location>
    <ligand>
        <name>substrate</name>
    </ligand>
</feature>
<feature type="binding site" evidence="1">
    <location>
        <begin position="67"/>
        <end position="69"/>
    </location>
    <ligand>
        <name>NADP(+)</name>
        <dbReference type="ChEBI" id="CHEBI:58349"/>
    </ligand>
</feature>
<feature type="binding site" evidence="1">
    <location>
        <begin position="88"/>
        <end position="91"/>
    </location>
    <ligand>
        <name>NADP(+)</name>
        <dbReference type="ChEBI" id="CHEBI:58349"/>
    </ligand>
</feature>
<feature type="binding site" evidence="1">
    <location>
        <position position="130"/>
    </location>
    <ligand>
        <name>substrate</name>
    </ligand>
</feature>
<feature type="binding site" evidence="1">
    <location>
        <begin position="131"/>
        <end position="138"/>
    </location>
    <ligand>
        <name>NADP(+)</name>
        <dbReference type="ChEBI" id="CHEBI:58349"/>
    </ligand>
</feature>
<feature type="binding site" evidence="1">
    <location>
        <position position="151"/>
    </location>
    <ligand>
        <name>substrate</name>
    </ligand>
</feature>
<feature type="binding site" evidence="1">
    <location>
        <position position="258"/>
    </location>
    <ligand>
        <name>dUMP</name>
        <dbReference type="ChEBI" id="CHEBI:246422"/>
    </ligand>
</feature>
<feature type="binding site" evidence="1">
    <location>
        <position position="404"/>
    </location>
    <ligand>
        <name>dUMP</name>
        <dbReference type="ChEBI" id="CHEBI:246422"/>
    </ligand>
</feature>
<feature type="binding site" evidence="1">
    <location>
        <begin position="422"/>
        <end position="426"/>
    </location>
    <ligand>
        <name>dUMP</name>
        <dbReference type="ChEBI" id="CHEBI:246422"/>
    </ligand>
</feature>
<feature type="binding site" evidence="1">
    <location>
        <position position="434"/>
    </location>
    <ligand>
        <name>dUMP</name>
        <dbReference type="ChEBI" id="CHEBI:246422"/>
    </ligand>
</feature>
<feature type="binding site" evidence="1">
    <location>
        <begin position="464"/>
        <end position="466"/>
    </location>
    <ligand>
        <name>dUMP</name>
        <dbReference type="ChEBI" id="CHEBI:246422"/>
    </ligand>
</feature>
<organism>
    <name type="scientific">Zea mays</name>
    <name type="common">Maize</name>
    <dbReference type="NCBI Taxonomy" id="4577"/>
    <lineage>
        <taxon>Eukaryota</taxon>
        <taxon>Viridiplantae</taxon>
        <taxon>Streptophyta</taxon>
        <taxon>Embryophyta</taxon>
        <taxon>Tracheophyta</taxon>
        <taxon>Spermatophyta</taxon>
        <taxon>Magnoliopsida</taxon>
        <taxon>Liliopsida</taxon>
        <taxon>Poales</taxon>
        <taxon>Poaceae</taxon>
        <taxon>PACMAD clade</taxon>
        <taxon>Panicoideae</taxon>
        <taxon>Andropogonodae</taxon>
        <taxon>Andropogoneae</taxon>
        <taxon>Tripsacinae</taxon>
        <taxon>Zea</taxon>
    </lineage>
</organism>
<keyword id="KW-0489">Methyltransferase</keyword>
<keyword id="KW-0511">Multifunctional enzyme</keyword>
<keyword id="KW-0521">NADP</keyword>
<keyword id="KW-0545">Nucleotide biosynthesis</keyword>
<keyword id="KW-0554">One-carbon metabolism</keyword>
<keyword id="KW-0560">Oxidoreductase</keyword>
<keyword id="KW-1185">Reference proteome</keyword>
<keyword id="KW-0808">Transferase</keyword>
<protein>
    <recommendedName>
        <fullName>Bifunctional dihydrofolate reductase-thymidylate synthase</fullName>
        <shortName>DHFR-TS</shortName>
    </recommendedName>
    <domain>
        <recommendedName>
            <fullName>Dihydrofolate reductase</fullName>
            <ecNumber>1.5.1.3</ecNumber>
        </recommendedName>
    </domain>
    <domain>
        <recommendedName>
            <fullName>Thymidylate synthase</fullName>
            <ecNumber>2.1.1.45</ecNumber>
        </recommendedName>
    </domain>
</protein>
<evidence type="ECO:0000250" key="1"/>
<evidence type="ECO:0000305" key="2"/>
<gene>
    <name type="primary">DRTS</name>
</gene>
<dbReference type="EC" id="1.5.1.3"/>
<dbReference type="EC" id="2.1.1.45"/>
<dbReference type="EMBL" id="AF073488">
    <property type="protein sequence ID" value="AAC26003.1"/>
    <property type="molecule type" value="mRNA"/>
</dbReference>
<dbReference type="PIR" id="T01684">
    <property type="entry name" value="T01684"/>
</dbReference>
<dbReference type="RefSeq" id="NP_001104916.1">
    <property type="nucleotide sequence ID" value="NM_001111446.1"/>
</dbReference>
<dbReference type="RefSeq" id="NP_001335496.1">
    <property type="nucleotide sequence ID" value="NM_001348567.1"/>
</dbReference>
<dbReference type="SMR" id="O81395"/>
<dbReference type="FunCoup" id="O81395">
    <property type="interactions" value="1882"/>
</dbReference>
<dbReference type="STRING" id="4577.O81395"/>
<dbReference type="PaxDb" id="4577-GRMZM2G005990_P01"/>
<dbReference type="GeneID" id="541707"/>
<dbReference type="KEGG" id="zma:541707"/>
<dbReference type="eggNOG" id="KOG0673">
    <property type="taxonomic scope" value="Eukaryota"/>
</dbReference>
<dbReference type="eggNOG" id="KOG1324">
    <property type="taxonomic scope" value="Eukaryota"/>
</dbReference>
<dbReference type="InParanoid" id="O81395"/>
<dbReference type="OrthoDB" id="766at2759"/>
<dbReference type="UniPathway" id="UPA00077">
    <property type="reaction ID" value="UER00158"/>
</dbReference>
<dbReference type="Proteomes" id="UP000007305">
    <property type="component" value="Unplaced"/>
</dbReference>
<dbReference type="ExpressionAtlas" id="O81395">
    <property type="expression patterns" value="baseline and differential"/>
</dbReference>
<dbReference type="GO" id="GO:0005829">
    <property type="term" value="C:cytosol"/>
    <property type="evidence" value="ECO:0000318"/>
    <property type="project" value="GO_Central"/>
</dbReference>
<dbReference type="GO" id="GO:0005739">
    <property type="term" value="C:mitochondrion"/>
    <property type="evidence" value="ECO:0000318"/>
    <property type="project" value="GO_Central"/>
</dbReference>
<dbReference type="GO" id="GO:0004146">
    <property type="term" value="F:dihydrofolate reductase activity"/>
    <property type="evidence" value="ECO:0000318"/>
    <property type="project" value="GO_Central"/>
</dbReference>
<dbReference type="GO" id="GO:0004799">
    <property type="term" value="F:thymidylate synthase activity"/>
    <property type="evidence" value="ECO:0000318"/>
    <property type="project" value="GO_Central"/>
</dbReference>
<dbReference type="GO" id="GO:0006231">
    <property type="term" value="P:dTMP biosynthetic process"/>
    <property type="evidence" value="ECO:0000318"/>
    <property type="project" value="GO_Central"/>
</dbReference>
<dbReference type="GO" id="GO:0032259">
    <property type="term" value="P:methylation"/>
    <property type="evidence" value="ECO:0007669"/>
    <property type="project" value="UniProtKB-KW"/>
</dbReference>
<dbReference type="GO" id="GO:0006730">
    <property type="term" value="P:one-carbon metabolic process"/>
    <property type="evidence" value="ECO:0007669"/>
    <property type="project" value="UniProtKB-KW"/>
</dbReference>
<dbReference type="GO" id="GO:0046654">
    <property type="term" value="P:tetrahydrofolate biosynthetic process"/>
    <property type="evidence" value="ECO:0007669"/>
    <property type="project" value="UniProtKB-UniPathway"/>
</dbReference>
<dbReference type="CDD" id="cd00209">
    <property type="entry name" value="DHFR"/>
    <property type="match status" value="1"/>
</dbReference>
<dbReference type="CDD" id="cd00351">
    <property type="entry name" value="TS_Pyrimidine_HMase"/>
    <property type="match status" value="1"/>
</dbReference>
<dbReference type="FunFam" id="3.40.430.10:FF:000003">
    <property type="entry name" value="Bifunctional dihydrofolate reductase-thymidylate synthase"/>
    <property type="match status" value="1"/>
</dbReference>
<dbReference type="FunFam" id="3.30.572.10:FF:000002">
    <property type="entry name" value="Possible thymidylate synthase"/>
    <property type="match status" value="1"/>
</dbReference>
<dbReference type="Gene3D" id="3.40.430.10">
    <property type="entry name" value="Dihydrofolate Reductase, subunit A"/>
    <property type="match status" value="1"/>
</dbReference>
<dbReference type="Gene3D" id="3.30.572.10">
    <property type="entry name" value="Thymidylate synthase/dCMP hydroxymethylase domain"/>
    <property type="match status" value="1"/>
</dbReference>
<dbReference type="HAMAP" id="MF_00008">
    <property type="entry name" value="Thymidy_synth_bact"/>
    <property type="match status" value="1"/>
</dbReference>
<dbReference type="InterPro" id="IPR024072">
    <property type="entry name" value="DHFR-like_dom_sf"/>
</dbReference>
<dbReference type="InterPro" id="IPR012262">
    <property type="entry name" value="DHFR-TS"/>
</dbReference>
<dbReference type="InterPro" id="IPR017925">
    <property type="entry name" value="DHFR_CS"/>
</dbReference>
<dbReference type="InterPro" id="IPR001796">
    <property type="entry name" value="DHFR_dom"/>
</dbReference>
<dbReference type="InterPro" id="IPR045097">
    <property type="entry name" value="Thymidate_synth/dCMP_Mease"/>
</dbReference>
<dbReference type="InterPro" id="IPR023451">
    <property type="entry name" value="Thymidate_synth/dCMP_Mease_dom"/>
</dbReference>
<dbReference type="InterPro" id="IPR036926">
    <property type="entry name" value="Thymidate_synth/dCMP_Mease_sf"/>
</dbReference>
<dbReference type="InterPro" id="IPR000398">
    <property type="entry name" value="Thymidylate_synthase"/>
</dbReference>
<dbReference type="InterPro" id="IPR020940">
    <property type="entry name" value="Thymidylate_synthase_AS"/>
</dbReference>
<dbReference type="NCBIfam" id="NF002497">
    <property type="entry name" value="PRK01827.1-3"/>
    <property type="match status" value="1"/>
</dbReference>
<dbReference type="NCBIfam" id="TIGR03284">
    <property type="entry name" value="thym_sym"/>
    <property type="match status" value="1"/>
</dbReference>
<dbReference type="PANTHER" id="PTHR11548:SF2">
    <property type="entry name" value="THYMIDYLATE SYNTHASE"/>
    <property type="match status" value="1"/>
</dbReference>
<dbReference type="PANTHER" id="PTHR11548">
    <property type="entry name" value="THYMIDYLATE SYNTHASE 1"/>
    <property type="match status" value="1"/>
</dbReference>
<dbReference type="Pfam" id="PF00186">
    <property type="entry name" value="DHFR_1"/>
    <property type="match status" value="1"/>
</dbReference>
<dbReference type="Pfam" id="PF00303">
    <property type="entry name" value="Thymidylat_synt"/>
    <property type="match status" value="1"/>
</dbReference>
<dbReference type="PIRSF" id="PIRSF000389">
    <property type="entry name" value="DHFR-TS"/>
    <property type="match status" value="1"/>
</dbReference>
<dbReference type="PRINTS" id="PR00108">
    <property type="entry name" value="THYMDSNTHASE"/>
</dbReference>
<dbReference type="SUPFAM" id="SSF53597">
    <property type="entry name" value="Dihydrofolate reductase-like"/>
    <property type="match status" value="1"/>
</dbReference>
<dbReference type="SUPFAM" id="SSF55831">
    <property type="entry name" value="Thymidylate synthase/dCMP hydroxymethylase"/>
    <property type="match status" value="1"/>
</dbReference>
<dbReference type="PROSITE" id="PS00075">
    <property type="entry name" value="DHFR_1"/>
    <property type="match status" value="1"/>
</dbReference>
<dbReference type="PROSITE" id="PS51330">
    <property type="entry name" value="DHFR_2"/>
    <property type="match status" value="1"/>
</dbReference>
<dbReference type="PROSITE" id="PS00091">
    <property type="entry name" value="THYMIDYLATE_SYNTHASE"/>
    <property type="match status" value="1"/>
</dbReference>
<comment type="function">
    <text evidence="1">Bifunctional enzyme. Involved in de novo dTMP biosynthesis. Key enzyme in folate metabolism. Can play two different roles depending on the source of dihydrofolate: de novo synthesis of tetrahydrofolate or recycling of the dihydrofolate released as one of the end products of the TS catalyzed reaction. Catalyzes an essential reaction for de novo glycine and purine synthesis, DNA precursor synthesis, and for the conversion of dUMP to dTMP (By similarity).</text>
</comment>
<comment type="catalytic activity">
    <reaction>
        <text>(6S)-5,6,7,8-tetrahydrofolate + NADP(+) = 7,8-dihydrofolate + NADPH + H(+)</text>
        <dbReference type="Rhea" id="RHEA:15009"/>
        <dbReference type="ChEBI" id="CHEBI:15378"/>
        <dbReference type="ChEBI" id="CHEBI:57451"/>
        <dbReference type="ChEBI" id="CHEBI:57453"/>
        <dbReference type="ChEBI" id="CHEBI:57783"/>
        <dbReference type="ChEBI" id="CHEBI:58349"/>
        <dbReference type="EC" id="1.5.1.3"/>
    </reaction>
</comment>
<comment type="catalytic activity">
    <reaction>
        <text>dUMP + (6R)-5,10-methylene-5,6,7,8-tetrahydrofolate = 7,8-dihydrofolate + dTMP</text>
        <dbReference type="Rhea" id="RHEA:12104"/>
        <dbReference type="ChEBI" id="CHEBI:15636"/>
        <dbReference type="ChEBI" id="CHEBI:57451"/>
        <dbReference type="ChEBI" id="CHEBI:63528"/>
        <dbReference type="ChEBI" id="CHEBI:246422"/>
        <dbReference type="EC" id="2.1.1.45"/>
    </reaction>
</comment>
<comment type="pathway">
    <text>Cofactor biosynthesis; tetrahydrofolate biosynthesis; 5,6,7,8-tetrahydrofolate from 7,8-dihydrofolate: step 1/1.</text>
</comment>
<comment type="similarity">
    <text evidence="2">In the N-terminal section; belongs to the dihydrofolate reductase family.</text>
</comment>
<comment type="similarity">
    <text evidence="2">In the C-terminal section; belongs to the thymidylate synthase family.</text>
</comment>